<sequence>MKSGRFIGVMSGTSLDGVDVVLATIDEHRVAQLASLSWPIPVSLKQAVLDICQGQQLTLSQFGQLDTQLGRLFADAVNALLKEQNLQARDIVAIGCHGQTVWHEPTGVAPHTLQIGDNNQIVARTGITVVGDFRRRDIALGGQGAPLVPAFHHALLAHPTERRMVLNIGGIANLSLLIPGQPVGGYDTGPGNMLMDAWIWRQAGKPYDKDAEWARAGKVILPLLQNMLSDPYFSQPAPKSTGREYFNYGWLERHLRHFPGVDPRDVQATLAELTAVTISEQVLLSGGCERLMVCGGGSRNPLLMARLAALLPGTEVTTTDAVGISGDDMEALAFAWLAWRTLAGLPGNLPSVTGASQETVLGAIFPANP</sequence>
<proteinExistence type="inferred from homology"/>
<evidence type="ECO:0000255" key="1">
    <source>
        <dbReference type="HAMAP-Rule" id="MF_01270"/>
    </source>
</evidence>
<keyword id="KW-0067">ATP-binding</keyword>
<keyword id="KW-0119">Carbohydrate metabolism</keyword>
<keyword id="KW-0418">Kinase</keyword>
<keyword id="KW-0547">Nucleotide-binding</keyword>
<keyword id="KW-0808">Transferase</keyword>
<name>ANMK_ECOLC</name>
<protein>
    <recommendedName>
        <fullName evidence="1">Anhydro-N-acetylmuramic acid kinase</fullName>
        <ecNumber evidence="1">2.7.1.170</ecNumber>
    </recommendedName>
    <alternativeName>
        <fullName evidence="1">AnhMurNAc kinase</fullName>
    </alternativeName>
</protein>
<accession>B1IQB4</accession>
<dbReference type="EC" id="2.7.1.170" evidence="1"/>
<dbReference type="EMBL" id="CP000946">
    <property type="protein sequence ID" value="ACA77635.1"/>
    <property type="molecule type" value="Genomic_DNA"/>
</dbReference>
<dbReference type="RefSeq" id="WP_000835077.1">
    <property type="nucleotide sequence ID" value="NZ_MTFT01000006.1"/>
</dbReference>
<dbReference type="SMR" id="B1IQB4"/>
<dbReference type="GeneID" id="93775794"/>
<dbReference type="KEGG" id="ecl:EcolC_1989"/>
<dbReference type="HOGENOM" id="CLU_038782_0_0_6"/>
<dbReference type="UniPathway" id="UPA00343"/>
<dbReference type="UniPathway" id="UPA00544"/>
<dbReference type="GO" id="GO:0005524">
    <property type="term" value="F:ATP binding"/>
    <property type="evidence" value="ECO:0007669"/>
    <property type="project" value="UniProtKB-UniRule"/>
</dbReference>
<dbReference type="GO" id="GO:0016301">
    <property type="term" value="F:kinase activity"/>
    <property type="evidence" value="ECO:0007669"/>
    <property type="project" value="UniProtKB-KW"/>
</dbReference>
<dbReference type="GO" id="GO:0016773">
    <property type="term" value="F:phosphotransferase activity, alcohol group as acceptor"/>
    <property type="evidence" value="ECO:0007669"/>
    <property type="project" value="UniProtKB-UniRule"/>
</dbReference>
<dbReference type="GO" id="GO:0097175">
    <property type="term" value="P:1,6-anhydro-N-acetyl-beta-muramic acid catabolic process"/>
    <property type="evidence" value="ECO:0007669"/>
    <property type="project" value="UniProtKB-UniRule"/>
</dbReference>
<dbReference type="GO" id="GO:0006040">
    <property type="term" value="P:amino sugar metabolic process"/>
    <property type="evidence" value="ECO:0007669"/>
    <property type="project" value="InterPro"/>
</dbReference>
<dbReference type="GO" id="GO:0009254">
    <property type="term" value="P:peptidoglycan turnover"/>
    <property type="evidence" value="ECO:0007669"/>
    <property type="project" value="UniProtKB-UniRule"/>
</dbReference>
<dbReference type="CDD" id="cd24050">
    <property type="entry name" value="ASKHA_NBD_ANMK"/>
    <property type="match status" value="1"/>
</dbReference>
<dbReference type="FunFam" id="3.30.420.40:FF:000090">
    <property type="entry name" value="Anhydro-N-acetylmuramic acid kinase"/>
    <property type="match status" value="1"/>
</dbReference>
<dbReference type="Gene3D" id="3.30.420.40">
    <property type="match status" value="2"/>
</dbReference>
<dbReference type="HAMAP" id="MF_01270">
    <property type="entry name" value="AnhMurNAc_kinase"/>
    <property type="match status" value="1"/>
</dbReference>
<dbReference type="InterPro" id="IPR005338">
    <property type="entry name" value="Anhydro_N_Ac-Mur_kinase"/>
</dbReference>
<dbReference type="InterPro" id="IPR043129">
    <property type="entry name" value="ATPase_NBD"/>
</dbReference>
<dbReference type="NCBIfam" id="NF007138">
    <property type="entry name" value="PRK09585.1-1"/>
    <property type="match status" value="1"/>
</dbReference>
<dbReference type="NCBIfam" id="NF007139">
    <property type="entry name" value="PRK09585.1-3"/>
    <property type="match status" value="1"/>
</dbReference>
<dbReference type="NCBIfam" id="NF007148">
    <property type="entry name" value="PRK09585.3-2"/>
    <property type="match status" value="1"/>
</dbReference>
<dbReference type="PANTHER" id="PTHR30605">
    <property type="entry name" value="ANHYDRO-N-ACETYLMURAMIC ACID KINASE"/>
    <property type="match status" value="1"/>
</dbReference>
<dbReference type="PANTHER" id="PTHR30605:SF0">
    <property type="entry name" value="ANHYDRO-N-ACETYLMURAMIC ACID KINASE"/>
    <property type="match status" value="1"/>
</dbReference>
<dbReference type="Pfam" id="PF03702">
    <property type="entry name" value="AnmK"/>
    <property type="match status" value="1"/>
</dbReference>
<dbReference type="SUPFAM" id="SSF53067">
    <property type="entry name" value="Actin-like ATPase domain"/>
    <property type="match status" value="1"/>
</dbReference>
<comment type="function">
    <text evidence="1">Catalyzes the specific phosphorylation of 1,6-anhydro-N-acetylmuramic acid (anhMurNAc) with the simultaneous cleavage of the 1,6-anhydro ring, generating MurNAc-6-P. Is required for the utilization of anhMurNAc either imported from the medium or derived from its own cell wall murein, and thus plays a role in cell wall recycling.</text>
</comment>
<comment type="catalytic activity">
    <reaction evidence="1">
        <text>1,6-anhydro-N-acetyl-beta-muramate + ATP + H2O = N-acetyl-D-muramate 6-phosphate + ADP + H(+)</text>
        <dbReference type="Rhea" id="RHEA:24952"/>
        <dbReference type="ChEBI" id="CHEBI:15377"/>
        <dbReference type="ChEBI" id="CHEBI:15378"/>
        <dbReference type="ChEBI" id="CHEBI:30616"/>
        <dbReference type="ChEBI" id="CHEBI:58690"/>
        <dbReference type="ChEBI" id="CHEBI:58722"/>
        <dbReference type="ChEBI" id="CHEBI:456216"/>
        <dbReference type="EC" id="2.7.1.170"/>
    </reaction>
</comment>
<comment type="pathway">
    <text evidence="1">Amino-sugar metabolism; 1,6-anhydro-N-acetylmuramate degradation.</text>
</comment>
<comment type="pathway">
    <text evidence="1">Cell wall biogenesis; peptidoglycan recycling.</text>
</comment>
<comment type="similarity">
    <text evidence="1">Belongs to the anhydro-N-acetylmuramic acid kinase family.</text>
</comment>
<gene>
    <name evidence="1" type="primary">anmK</name>
    <name type="ordered locus">EcolC_1989</name>
</gene>
<reference key="1">
    <citation type="submission" date="2008-02" db="EMBL/GenBank/DDBJ databases">
        <title>Complete sequence of Escherichia coli C str. ATCC 8739.</title>
        <authorList>
            <person name="Copeland A."/>
            <person name="Lucas S."/>
            <person name="Lapidus A."/>
            <person name="Glavina del Rio T."/>
            <person name="Dalin E."/>
            <person name="Tice H."/>
            <person name="Bruce D."/>
            <person name="Goodwin L."/>
            <person name="Pitluck S."/>
            <person name="Kiss H."/>
            <person name="Brettin T."/>
            <person name="Detter J.C."/>
            <person name="Han C."/>
            <person name="Kuske C.R."/>
            <person name="Schmutz J."/>
            <person name="Larimer F."/>
            <person name="Land M."/>
            <person name="Hauser L."/>
            <person name="Kyrpides N."/>
            <person name="Mikhailova N."/>
            <person name="Ingram L."/>
            <person name="Richardson P."/>
        </authorList>
    </citation>
    <scope>NUCLEOTIDE SEQUENCE [LARGE SCALE GENOMIC DNA]</scope>
    <source>
        <strain>ATCC 8739 / DSM 1576 / NBRC 3972 / NCIMB 8545 / WDCM 00012 / Crooks</strain>
    </source>
</reference>
<feature type="chain" id="PRO_1000085834" description="Anhydro-N-acetylmuramic acid kinase">
    <location>
        <begin position="1"/>
        <end position="369"/>
    </location>
</feature>
<feature type="binding site" evidence="1">
    <location>
        <begin position="12"/>
        <end position="19"/>
    </location>
    <ligand>
        <name>ATP</name>
        <dbReference type="ChEBI" id="CHEBI:30616"/>
    </ligand>
</feature>
<organism>
    <name type="scientific">Escherichia coli (strain ATCC 8739 / DSM 1576 / NBRC 3972 / NCIMB 8545 / WDCM 00012 / Crooks)</name>
    <dbReference type="NCBI Taxonomy" id="481805"/>
    <lineage>
        <taxon>Bacteria</taxon>
        <taxon>Pseudomonadati</taxon>
        <taxon>Pseudomonadota</taxon>
        <taxon>Gammaproteobacteria</taxon>
        <taxon>Enterobacterales</taxon>
        <taxon>Enterobacteriaceae</taxon>
        <taxon>Escherichia</taxon>
    </lineage>
</organism>